<comment type="function">
    <text evidence="1">Catalyzes the 2-thiolation of uridine at the wobble position (U34) of tRNA, leading to the formation of s(2)U34.</text>
</comment>
<comment type="catalytic activity">
    <reaction evidence="1">
        <text>S-sulfanyl-L-cysteinyl-[protein] + uridine(34) in tRNA + AH2 + ATP = 2-thiouridine(34) in tRNA + L-cysteinyl-[protein] + A + AMP + diphosphate + H(+)</text>
        <dbReference type="Rhea" id="RHEA:47032"/>
        <dbReference type="Rhea" id="RHEA-COMP:10131"/>
        <dbReference type="Rhea" id="RHEA-COMP:11726"/>
        <dbReference type="Rhea" id="RHEA-COMP:11727"/>
        <dbReference type="Rhea" id="RHEA-COMP:11728"/>
        <dbReference type="ChEBI" id="CHEBI:13193"/>
        <dbReference type="ChEBI" id="CHEBI:15378"/>
        <dbReference type="ChEBI" id="CHEBI:17499"/>
        <dbReference type="ChEBI" id="CHEBI:29950"/>
        <dbReference type="ChEBI" id="CHEBI:30616"/>
        <dbReference type="ChEBI" id="CHEBI:33019"/>
        <dbReference type="ChEBI" id="CHEBI:61963"/>
        <dbReference type="ChEBI" id="CHEBI:65315"/>
        <dbReference type="ChEBI" id="CHEBI:87170"/>
        <dbReference type="ChEBI" id="CHEBI:456215"/>
        <dbReference type="EC" id="2.8.1.13"/>
    </reaction>
</comment>
<comment type="subcellular location">
    <subcellularLocation>
        <location evidence="1">Cytoplasm</location>
    </subcellularLocation>
</comment>
<comment type="similarity">
    <text evidence="1">Belongs to the MnmA/TRMU family.</text>
</comment>
<name>MNMA_SYNWW</name>
<reference key="1">
    <citation type="journal article" date="2010" name="Environ. Microbiol.">
        <title>The genome of Syntrophomonas wolfei: new insights into syntrophic metabolism and biohydrogen production.</title>
        <authorList>
            <person name="Sieber J.R."/>
            <person name="Sims D.R."/>
            <person name="Han C."/>
            <person name="Kim E."/>
            <person name="Lykidis A."/>
            <person name="Lapidus A.L."/>
            <person name="McDonnald E."/>
            <person name="Rohlin L."/>
            <person name="Culley D.E."/>
            <person name="Gunsalus R."/>
            <person name="McInerney M.J."/>
        </authorList>
    </citation>
    <scope>NUCLEOTIDE SEQUENCE [LARGE SCALE GENOMIC DNA]</scope>
    <source>
        <strain>DSM 2245B / Goettingen</strain>
    </source>
</reference>
<feature type="chain" id="PRO_0000349835" description="tRNA-specific 2-thiouridylase MnmA">
    <location>
        <begin position="1"/>
        <end position="338"/>
    </location>
</feature>
<feature type="region of interest" description="Interaction with tRNA" evidence="1">
    <location>
        <begin position="135"/>
        <end position="137"/>
    </location>
</feature>
<feature type="region of interest" description="Interaction with tRNA" evidence="1">
    <location>
        <begin position="288"/>
        <end position="289"/>
    </location>
</feature>
<feature type="active site" description="Nucleophile" evidence="1">
    <location>
        <position position="87"/>
    </location>
</feature>
<feature type="active site" description="Cysteine persulfide intermediate" evidence="1">
    <location>
        <position position="185"/>
    </location>
</feature>
<feature type="binding site" evidence="1">
    <location>
        <begin position="6"/>
        <end position="13"/>
    </location>
    <ligand>
        <name>ATP</name>
        <dbReference type="ChEBI" id="CHEBI:30616"/>
    </ligand>
</feature>
<feature type="binding site" evidence="1">
    <location>
        <position position="32"/>
    </location>
    <ligand>
        <name>ATP</name>
        <dbReference type="ChEBI" id="CHEBI:30616"/>
    </ligand>
</feature>
<feature type="binding site" evidence="1">
    <location>
        <position position="111"/>
    </location>
    <ligand>
        <name>ATP</name>
        <dbReference type="ChEBI" id="CHEBI:30616"/>
    </ligand>
</feature>
<feature type="site" description="Interaction with tRNA" evidence="1">
    <location>
        <position position="112"/>
    </location>
</feature>
<feature type="site" description="Interaction with tRNA" evidence="1">
    <location>
        <position position="321"/>
    </location>
</feature>
<feature type="disulfide bond" description="Alternate" evidence="1">
    <location>
        <begin position="87"/>
        <end position="185"/>
    </location>
</feature>
<protein>
    <recommendedName>
        <fullName evidence="1">tRNA-specific 2-thiouridylase MnmA</fullName>
        <ecNumber evidence="1">2.8.1.13</ecNumber>
    </recommendedName>
</protein>
<keyword id="KW-0067">ATP-binding</keyword>
<keyword id="KW-0963">Cytoplasm</keyword>
<keyword id="KW-1015">Disulfide bond</keyword>
<keyword id="KW-0547">Nucleotide-binding</keyword>
<keyword id="KW-1185">Reference proteome</keyword>
<keyword id="KW-0694">RNA-binding</keyword>
<keyword id="KW-0808">Transferase</keyword>
<keyword id="KW-0819">tRNA processing</keyword>
<keyword id="KW-0820">tRNA-binding</keyword>
<organism>
    <name type="scientific">Syntrophomonas wolfei subsp. wolfei (strain DSM 2245B / Goettingen)</name>
    <dbReference type="NCBI Taxonomy" id="335541"/>
    <lineage>
        <taxon>Bacteria</taxon>
        <taxon>Bacillati</taxon>
        <taxon>Bacillota</taxon>
        <taxon>Clostridia</taxon>
        <taxon>Eubacteriales</taxon>
        <taxon>Syntrophomonadaceae</taxon>
        <taxon>Syntrophomonas</taxon>
    </lineage>
</organism>
<proteinExistence type="inferred from homology"/>
<sequence length="338" mass="38800">MKVAVLMSGGIDSTVSALLLREQGYEVTGLTMVHLEREAGEKAARIANELQIEHKVVDLREPFQSAVVDYFCREYEQGHTPNPCVKCNEEIKFGLLLKAALDLGADKVASGHYARIDYDDKSQCYRLMKGVDPRKDQSYFLYRLKQQQLSRLIFPLGGYRKEEVREMARRYHLQLAEEKESQEVCFIPGDYREFIRPHVSYKEGSFLDRTGKILGRHRGIPFYTIGQRRGLAVSAGRPLYVLKIDPEKNQILLGENEVLFSKLLRFKQNHFICSQDFELLIKVKAKIRYAARESEAILHCIEDDIWELVFDEAQRAATPGQSVVYYQGDYVLGGGTIY</sequence>
<evidence type="ECO:0000255" key="1">
    <source>
        <dbReference type="HAMAP-Rule" id="MF_00144"/>
    </source>
</evidence>
<accession>Q0AZQ5</accession>
<gene>
    <name evidence="1" type="primary">mnmA</name>
    <name type="ordered locus">Swol_0464</name>
</gene>
<dbReference type="EC" id="2.8.1.13" evidence="1"/>
<dbReference type="EMBL" id="CP000448">
    <property type="protein sequence ID" value="ABI67799.1"/>
    <property type="molecule type" value="Genomic_DNA"/>
</dbReference>
<dbReference type="RefSeq" id="WP_011639907.1">
    <property type="nucleotide sequence ID" value="NC_008346.1"/>
</dbReference>
<dbReference type="SMR" id="Q0AZQ5"/>
<dbReference type="STRING" id="335541.Swol_0464"/>
<dbReference type="KEGG" id="swo:Swol_0464"/>
<dbReference type="eggNOG" id="COG0482">
    <property type="taxonomic scope" value="Bacteria"/>
</dbReference>
<dbReference type="HOGENOM" id="CLU_035188_0_0_9"/>
<dbReference type="OrthoDB" id="9800696at2"/>
<dbReference type="Proteomes" id="UP000001968">
    <property type="component" value="Chromosome"/>
</dbReference>
<dbReference type="GO" id="GO:0005737">
    <property type="term" value="C:cytoplasm"/>
    <property type="evidence" value="ECO:0007669"/>
    <property type="project" value="UniProtKB-SubCell"/>
</dbReference>
<dbReference type="GO" id="GO:0005524">
    <property type="term" value="F:ATP binding"/>
    <property type="evidence" value="ECO:0007669"/>
    <property type="project" value="UniProtKB-KW"/>
</dbReference>
<dbReference type="GO" id="GO:0000049">
    <property type="term" value="F:tRNA binding"/>
    <property type="evidence" value="ECO:0007669"/>
    <property type="project" value="UniProtKB-KW"/>
</dbReference>
<dbReference type="GO" id="GO:0103016">
    <property type="term" value="F:tRNA-uridine 2-sulfurtransferase activity"/>
    <property type="evidence" value="ECO:0007669"/>
    <property type="project" value="UniProtKB-EC"/>
</dbReference>
<dbReference type="GO" id="GO:0002143">
    <property type="term" value="P:tRNA wobble position uridine thiolation"/>
    <property type="evidence" value="ECO:0007669"/>
    <property type="project" value="TreeGrafter"/>
</dbReference>
<dbReference type="CDD" id="cd01998">
    <property type="entry name" value="MnmA_TRMU-like"/>
    <property type="match status" value="1"/>
</dbReference>
<dbReference type="FunFam" id="2.30.30.280:FF:000001">
    <property type="entry name" value="tRNA-specific 2-thiouridylase MnmA"/>
    <property type="match status" value="1"/>
</dbReference>
<dbReference type="Gene3D" id="2.30.30.280">
    <property type="entry name" value="Adenine nucleotide alpha hydrolases-like domains"/>
    <property type="match status" value="1"/>
</dbReference>
<dbReference type="Gene3D" id="3.40.50.620">
    <property type="entry name" value="HUPs"/>
    <property type="match status" value="1"/>
</dbReference>
<dbReference type="Gene3D" id="2.40.30.10">
    <property type="entry name" value="Translation factors"/>
    <property type="match status" value="1"/>
</dbReference>
<dbReference type="HAMAP" id="MF_00144">
    <property type="entry name" value="tRNA_thiouridyl_MnmA"/>
    <property type="match status" value="1"/>
</dbReference>
<dbReference type="InterPro" id="IPR004506">
    <property type="entry name" value="MnmA-like"/>
</dbReference>
<dbReference type="InterPro" id="IPR046885">
    <property type="entry name" value="MnmA-like_C"/>
</dbReference>
<dbReference type="InterPro" id="IPR046884">
    <property type="entry name" value="MnmA-like_central"/>
</dbReference>
<dbReference type="InterPro" id="IPR023382">
    <property type="entry name" value="MnmA-like_central_sf"/>
</dbReference>
<dbReference type="InterPro" id="IPR014729">
    <property type="entry name" value="Rossmann-like_a/b/a_fold"/>
</dbReference>
<dbReference type="NCBIfam" id="NF001138">
    <property type="entry name" value="PRK00143.1"/>
    <property type="match status" value="1"/>
</dbReference>
<dbReference type="NCBIfam" id="TIGR00420">
    <property type="entry name" value="trmU"/>
    <property type="match status" value="1"/>
</dbReference>
<dbReference type="PANTHER" id="PTHR11933:SF5">
    <property type="entry name" value="MITOCHONDRIAL TRNA-SPECIFIC 2-THIOURIDYLASE 1"/>
    <property type="match status" value="1"/>
</dbReference>
<dbReference type="PANTHER" id="PTHR11933">
    <property type="entry name" value="TRNA 5-METHYLAMINOMETHYL-2-THIOURIDYLATE -METHYLTRANSFERASE"/>
    <property type="match status" value="1"/>
</dbReference>
<dbReference type="Pfam" id="PF03054">
    <property type="entry name" value="tRNA_Me_trans"/>
    <property type="match status" value="1"/>
</dbReference>
<dbReference type="Pfam" id="PF20258">
    <property type="entry name" value="tRNA_Me_trans_C"/>
    <property type="match status" value="1"/>
</dbReference>
<dbReference type="Pfam" id="PF20259">
    <property type="entry name" value="tRNA_Me_trans_M"/>
    <property type="match status" value="1"/>
</dbReference>
<dbReference type="SUPFAM" id="SSF52402">
    <property type="entry name" value="Adenine nucleotide alpha hydrolases-like"/>
    <property type="match status" value="1"/>
</dbReference>